<reference key="1">
    <citation type="journal article" date="2008" name="J. Bacteriol.">
        <title>The complete genome sequence of Escherichia coli DH10B: insights into the biology of a laboratory workhorse.</title>
        <authorList>
            <person name="Durfee T."/>
            <person name="Nelson R."/>
            <person name="Baldwin S."/>
            <person name="Plunkett G. III"/>
            <person name="Burland V."/>
            <person name="Mau B."/>
            <person name="Petrosino J.F."/>
            <person name="Qin X."/>
            <person name="Muzny D.M."/>
            <person name="Ayele M."/>
            <person name="Gibbs R.A."/>
            <person name="Csorgo B."/>
            <person name="Posfai G."/>
            <person name="Weinstock G.M."/>
            <person name="Blattner F.R."/>
        </authorList>
    </citation>
    <scope>NUCLEOTIDE SEQUENCE [LARGE SCALE GENOMIC DNA]</scope>
    <source>
        <strain>K12 / DH10B</strain>
    </source>
</reference>
<keyword id="KW-0378">Hydrolase</keyword>
<comment type="function">
    <text evidence="1">Hydrolyzes ureidoacrylate to form aminoacrylate and carbamate. The carbamate hydrolyzes spontaneously, thereby releasing one of the nitrogen atoms of the pyrimidine ring as ammonia and one of its carbon atoms as CO2.</text>
</comment>
<comment type="catalytic activity">
    <reaction evidence="1">
        <text>(Z)-3-ureidoacrylate + H2O + H(+) = (Z)-3-aminoacrylate + NH4(+) + CO2</text>
        <dbReference type="Rhea" id="RHEA:42624"/>
        <dbReference type="ChEBI" id="CHEBI:15377"/>
        <dbReference type="ChEBI" id="CHEBI:15378"/>
        <dbReference type="ChEBI" id="CHEBI:16526"/>
        <dbReference type="ChEBI" id="CHEBI:28938"/>
        <dbReference type="ChEBI" id="CHEBI:59891"/>
        <dbReference type="ChEBI" id="CHEBI:59894"/>
        <dbReference type="EC" id="3.5.1.110"/>
    </reaction>
</comment>
<comment type="catalytic activity">
    <reaction evidence="1">
        <text>(Z)-3-ureidoacrylate + H2O = (Z)-3-aminoacrylate + carbamate + H(+)</text>
        <dbReference type="Rhea" id="RHEA:31603"/>
        <dbReference type="ChEBI" id="CHEBI:13941"/>
        <dbReference type="ChEBI" id="CHEBI:15377"/>
        <dbReference type="ChEBI" id="CHEBI:15378"/>
        <dbReference type="ChEBI" id="CHEBI:59891"/>
        <dbReference type="ChEBI" id="CHEBI:59894"/>
    </reaction>
</comment>
<comment type="catalytic activity">
    <reaction evidence="1">
        <text>(Z)-2-methylureidoacrylate + H2O + H(+) = (Z)-2-methylaminoacrylate + NH4(+) + CO2</text>
        <dbReference type="Rhea" id="RHEA:42620"/>
        <dbReference type="ChEBI" id="CHEBI:15377"/>
        <dbReference type="ChEBI" id="CHEBI:15378"/>
        <dbReference type="ChEBI" id="CHEBI:16526"/>
        <dbReference type="ChEBI" id="CHEBI:28938"/>
        <dbReference type="ChEBI" id="CHEBI:143783"/>
        <dbReference type="ChEBI" id="CHEBI:145735"/>
        <dbReference type="EC" id="3.5.1.110"/>
    </reaction>
</comment>
<comment type="induction">
    <text evidence="1">Up-regulated by the nitrogen regulatory protein C (NtrC also called GlnG) and repressed by RutR.</text>
</comment>
<comment type="similarity">
    <text evidence="1">Belongs to the isochorismatase family. RutB subfamily.</text>
</comment>
<gene>
    <name evidence="1" type="primary">rutB</name>
    <name type="ordered locus">ECDH10B_1083</name>
</gene>
<name>RUTB_ECODH</name>
<sequence length="230" mass="25209">MTTLTARPEAITFDPQQSALIVVDMQNAYATPGGYLDLAGFDVSTTRPVIANIQTAVTAARAAGMLIIWFQNGWDEQYVEAGGPGSPNFHKSNALKTMRKQPQLQGKLLAKGSWDYQLVDELVPQPGDIVLPKPRYSGFFNTPLDSILRSRGIRHLVFTGIATNVCVESTLRDGFFLEYFGVVLEDATHQAGPKFAQKAALFNIETFFGWVSDVETFCDALSPTSFAHIA</sequence>
<protein>
    <recommendedName>
        <fullName evidence="1">Ureidoacrylate amidohydrolase RutB</fullName>
        <ecNumber evidence="1">3.5.1.110</ecNumber>
    </recommendedName>
</protein>
<proteinExistence type="inferred from homology"/>
<accession>B1X9D2</accession>
<evidence type="ECO:0000255" key="1">
    <source>
        <dbReference type="HAMAP-Rule" id="MF_00830"/>
    </source>
</evidence>
<feature type="chain" id="PRO_0000402662" description="Ureidoacrylate amidohydrolase RutB">
    <location>
        <begin position="1"/>
        <end position="230"/>
    </location>
</feature>
<feature type="active site" description="Proton acceptor" evidence="1">
    <location>
        <position position="24"/>
    </location>
</feature>
<feature type="active site" evidence="1">
    <location>
        <position position="133"/>
    </location>
</feature>
<feature type="active site" description="Nucleophile" evidence="1">
    <location>
        <position position="166"/>
    </location>
</feature>
<organism>
    <name type="scientific">Escherichia coli (strain K12 / DH10B)</name>
    <dbReference type="NCBI Taxonomy" id="316385"/>
    <lineage>
        <taxon>Bacteria</taxon>
        <taxon>Pseudomonadati</taxon>
        <taxon>Pseudomonadota</taxon>
        <taxon>Gammaproteobacteria</taxon>
        <taxon>Enterobacterales</taxon>
        <taxon>Enterobacteriaceae</taxon>
        <taxon>Escherichia</taxon>
    </lineage>
</organism>
<dbReference type="EC" id="3.5.1.110" evidence="1"/>
<dbReference type="EMBL" id="CP000948">
    <property type="protein sequence ID" value="ACB02212.1"/>
    <property type="molecule type" value="Genomic_DNA"/>
</dbReference>
<dbReference type="RefSeq" id="WP_001393558.1">
    <property type="nucleotide sequence ID" value="NC_010473.1"/>
</dbReference>
<dbReference type="SMR" id="B1X9D2"/>
<dbReference type="KEGG" id="ecd:ECDH10B_1083"/>
<dbReference type="HOGENOM" id="CLU_068979_8_0_6"/>
<dbReference type="GO" id="GO:0016811">
    <property type="term" value="F:hydrolase activity, acting on carbon-nitrogen (but not peptide) bonds, in linear amides"/>
    <property type="evidence" value="ECO:0007669"/>
    <property type="project" value="UniProtKB-UniRule"/>
</dbReference>
<dbReference type="GO" id="GO:0019740">
    <property type="term" value="P:nitrogen utilization"/>
    <property type="evidence" value="ECO:0007669"/>
    <property type="project" value="UniProtKB-UniRule"/>
</dbReference>
<dbReference type="GO" id="GO:0006212">
    <property type="term" value="P:uracil catabolic process"/>
    <property type="evidence" value="ECO:0007669"/>
    <property type="project" value="UniProtKB-UniRule"/>
</dbReference>
<dbReference type="CDD" id="cd00431">
    <property type="entry name" value="cysteine_hydrolases"/>
    <property type="match status" value="1"/>
</dbReference>
<dbReference type="FunFam" id="3.40.50.850:FF:000004">
    <property type="entry name" value="Peroxyureidoacrylate/ureidoacrylate amidohydrolase RutB"/>
    <property type="match status" value="1"/>
</dbReference>
<dbReference type="Gene3D" id="3.40.50.850">
    <property type="entry name" value="Isochorismatase-like"/>
    <property type="match status" value="1"/>
</dbReference>
<dbReference type="HAMAP" id="MF_00830">
    <property type="entry name" value="RutB"/>
    <property type="match status" value="1"/>
</dbReference>
<dbReference type="InterPro" id="IPR000868">
    <property type="entry name" value="Isochorismatase-like_dom"/>
</dbReference>
<dbReference type="InterPro" id="IPR050272">
    <property type="entry name" value="Isochorismatase-like_hydrls"/>
</dbReference>
<dbReference type="InterPro" id="IPR036380">
    <property type="entry name" value="Isochorismatase-like_sf"/>
</dbReference>
<dbReference type="InterPro" id="IPR019916">
    <property type="entry name" value="RutB"/>
</dbReference>
<dbReference type="NCBIfam" id="TIGR03614">
    <property type="entry name" value="RutB"/>
    <property type="match status" value="1"/>
</dbReference>
<dbReference type="PANTHER" id="PTHR43540:SF6">
    <property type="entry name" value="ISOCHORISMATASE-LIKE DOMAIN-CONTAINING PROTEIN"/>
    <property type="match status" value="1"/>
</dbReference>
<dbReference type="PANTHER" id="PTHR43540">
    <property type="entry name" value="PEROXYUREIDOACRYLATE/UREIDOACRYLATE AMIDOHYDROLASE-RELATED"/>
    <property type="match status" value="1"/>
</dbReference>
<dbReference type="Pfam" id="PF00857">
    <property type="entry name" value="Isochorismatase"/>
    <property type="match status" value="1"/>
</dbReference>
<dbReference type="SUPFAM" id="SSF52499">
    <property type="entry name" value="Isochorismatase-like hydrolases"/>
    <property type="match status" value="1"/>
</dbReference>